<organism>
    <name type="scientific">Oryza sativa subsp. japonica</name>
    <name type="common">Rice</name>
    <dbReference type="NCBI Taxonomy" id="39947"/>
    <lineage>
        <taxon>Eukaryota</taxon>
        <taxon>Viridiplantae</taxon>
        <taxon>Streptophyta</taxon>
        <taxon>Embryophyta</taxon>
        <taxon>Tracheophyta</taxon>
        <taxon>Spermatophyta</taxon>
        <taxon>Magnoliopsida</taxon>
        <taxon>Liliopsida</taxon>
        <taxon>Poales</taxon>
        <taxon>Poaceae</taxon>
        <taxon>BOP clade</taxon>
        <taxon>Oryzoideae</taxon>
        <taxon>Oryzeae</taxon>
        <taxon>Oryzinae</taxon>
        <taxon>Oryza</taxon>
        <taxon>Oryza sativa</taxon>
    </lineage>
</organism>
<keyword id="KW-1185">Reference proteome</keyword>
<keyword id="KW-0943">RNA-mediated gene silencing</keyword>
<reference key="1">
    <citation type="journal article" date="2002" name="Nature">
        <title>The genome sequence and structure of rice chromosome 1.</title>
        <authorList>
            <person name="Sasaki T."/>
            <person name="Matsumoto T."/>
            <person name="Yamamoto K."/>
            <person name="Sakata K."/>
            <person name="Baba T."/>
            <person name="Katayose Y."/>
            <person name="Wu J."/>
            <person name="Niimura Y."/>
            <person name="Cheng Z."/>
            <person name="Nagamura Y."/>
            <person name="Antonio B.A."/>
            <person name="Kanamori H."/>
            <person name="Hosokawa S."/>
            <person name="Masukawa M."/>
            <person name="Arikawa K."/>
            <person name="Chiden Y."/>
            <person name="Hayashi M."/>
            <person name="Okamoto M."/>
            <person name="Ando T."/>
            <person name="Aoki H."/>
            <person name="Arita K."/>
            <person name="Hamada M."/>
            <person name="Harada C."/>
            <person name="Hijishita S."/>
            <person name="Honda M."/>
            <person name="Ichikawa Y."/>
            <person name="Idonuma A."/>
            <person name="Iijima M."/>
            <person name="Ikeda M."/>
            <person name="Ikeno M."/>
            <person name="Ito S."/>
            <person name="Ito T."/>
            <person name="Ito Y."/>
            <person name="Ito Y."/>
            <person name="Iwabuchi A."/>
            <person name="Kamiya K."/>
            <person name="Karasawa W."/>
            <person name="Katagiri S."/>
            <person name="Kikuta A."/>
            <person name="Kobayashi N."/>
            <person name="Kono I."/>
            <person name="Machita K."/>
            <person name="Maehara T."/>
            <person name="Mizuno H."/>
            <person name="Mizubayashi T."/>
            <person name="Mukai Y."/>
            <person name="Nagasaki H."/>
            <person name="Nakashima M."/>
            <person name="Nakama Y."/>
            <person name="Nakamichi Y."/>
            <person name="Nakamura M."/>
            <person name="Namiki N."/>
            <person name="Negishi M."/>
            <person name="Ohta I."/>
            <person name="Ono N."/>
            <person name="Saji S."/>
            <person name="Sakai K."/>
            <person name="Shibata M."/>
            <person name="Shimokawa T."/>
            <person name="Shomura A."/>
            <person name="Song J."/>
            <person name="Takazaki Y."/>
            <person name="Terasawa K."/>
            <person name="Tsuji K."/>
            <person name="Waki K."/>
            <person name="Yamagata H."/>
            <person name="Yamane H."/>
            <person name="Yoshiki S."/>
            <person name="Yoshihara R."/>
            <person name="Yukawa K."/>
            <person name="Zhong H."/>
            <person name="Iwama H."/>
            <person name="Endo T."/>
            <person name="Ito H."/>
            <person name="Hahn J.H."/>
            <person name="Kim H.-I."/>
            <person name="Eun M.-Y."/>
            <person name="Yano M."/>
            <person name="Jiang J."/>
            <person name="Gojobori T."/>
        </authorList>
    </citation>
    <scope>NUCLEOTIDE SEQUENCE [LARGE SCALE GENOMIC DNA]</scope>
    <source>
        <strain>cv. Nipponbare</strain>
    </source>
</reference>
<reference key="2">
    <citation type="journal article" date="2005" name="Nature">
        <title>The map-based sequence of the rice genome.</title>
        <authorList>
            <consortium name="International rice genome sequencing project (IRGSP)"/>
        </authorList>
    </citation>
    <scope>NUCLEOTIDE SEQUENCE [LARGE SCALE GENOMIC DNA]</scope>
    <source>
        <strain>cv. Nipponbare</strain>
    </source>
</reference>
<reference key="3">
    <citation type="journal article" date="2008" name="Nucleic Acids Res.">
        <title>The rice annotation project database (RAP-DB): 2008 update.</title>
        <authorList>
            <consortium name="The rice annotation project (RAP)"/>
        </authorList>
    </citation>
    <scope>GENOME REANNOTATION</scope>
    <source>
        <strain>cv. Nipponbare</strain>
    </source>
</reference>
<reference key="4">
    <citation type="journal article" date="2013" name="Rice">
        <title>Improvement of the Oryza sativa Nipponbare reference genome using next generation sequence and optical map data.</title>
        <authorList>
            <person name="Kawahara Y."/>
            <person name="de la Bastide M."/>
            <person name="Hamilton J.P."/>
            <person name="Kanamori H."/>
            <person name="McCombie W.R."/>
            <person name="Ouyang S."/>
            <person name="Schwartz D.C."/>
            <person name="Tanaka T."/>
            <person name="Wu J."/>
            <person name="Zhou S."/>
            <person name="Childs K.L."/>
            <person name="Davidson R.M."/>
            <person name="Lin H."/>
            <person name="Quesada-Ocampo L."/>
            <person name="Vaillancourt B."/>
            <person name="Sakai H."/>
            <person name="Lee S.S."/>
            <person name="Kim J."/>
            <person name="Numa H."/>
            <person name="Itoh T."/>
            <person name="Buell C.R."/>
            <person name="Matsumoto T."/>
        </authorList>
    </citation>
    <scope>GENOME REANNOTATION</scope>
    <source>
        <strain>cv. Nipponbare</strain>
    </source>
</reference>
<reference key="5">
    <citation type="journal article" date="2003" name="Science">
        <title>Collection, mapping, and annotation of over 28,000 cDNA clones from japonica rice.</title>
        <authorList>
            <consortium name="The rice full-length cDNA consortium"/>
        </authorList>
    </citation>
    <scope>NUCLEOTIDE SEQUENCE [LARGE SCALE MRNA]</scope>
    <source>
        <strain>cv. Nipponbare</strain>
    </source>
</reference>
<reference key="6">
    <citation type="journal article" date="2008" name="BMC Genomics">
        <title>Genome-wide identification, organization and phylogenetic analysis of dicer-like, argonaute and RNA-dependent RNA polymerase gene families and their expression analysis during reproductive development and stress in rice.</title>
        <authorList>
            <person name="Kapoor M."/>
            <person name="Arora R."/>
            <person name="Lama T."/>
            <person name="Nijhawan A."/>
            <person name="Khurana J.P."/>
            <person name="Tyagi A.K."/>
            <person name="Kapoor S."/>
        </authorList>
    </citation>
    <scope>GENE FAMILY</scope>
    <scope>NOMENCLATURE</scope>
</reference>
<gene>
    <name type="primary">AGO4A</name>
    <name type="ordered locus">Os01g0275600</name>
    <name type="ordered locus">LOC_Os01g16870</name>
    <name type="ORF">P0038F12.13</name>
</gene>
<proteinExistence type="evidence at transcript level"/>
<accession>Q9SDG8</accession>
<accession>A0A0P0V0X4</accession>
<evidence type="ECO:0000250" key="1"/>
<evidence type="ECO:0000255" key="2">
    <source>
        <dbReference type="PROSITE-ProRule" id="PRU00142"/>
    </source>
</evidence>
<evidence type="ECO:0000255" key="3">
    <source>
        <dbReference type="PROSITE-ProRule" id="PRU00150"/>
    </source>
</evidence>
<evidence type="ECO:0000256" key="4">
    <source>
        <dbReference type="SAM" id="MobiDB-lite"/>
    </source>
</evidence>
<evidence type="ECO:0000305" key="5"/>
<feature type="chain" id="PRO_0000378431" description="Protein argonaute 4A">
    <location>
        <begin position="1"/>
        <end position="904"/>
    </location>
</feature>
<feature type="domain" description="PAZ" evidence="2">
    <location>
        <begin position="274"/>
        <end position="388"/>
    </location>
</feature>
<feature type="domain" description="Piwi" evidence="3">
    <location>
        <begin position="557"/>
        <end position="865"/>
    </location>
</feature>
<feature type="region of interest" description="Disordered" evidence="4">
    <location>
        <begin position="1"/>
        <end position="33"/>
    </location>
</feature>
<feature type="region of interest" description="Disordered" evidence="4">
    <location>
        <begin position="143"/>
        <end position="166"/>
    </location>
</feature>
<feature type="region of interest" description="Disordered" evidence="4">
    <location>
        <begin position="871"/>
        <end position="890"/>
    </location>
</feature>
<feature type="compositionally biased region" description="Pro residues" evidence="4">
    <location>
        <begin position="11"/>
        <end position="21"/>
    </location>
</feature>
<feature type="compositionally biased region" description="Low complexity" evidence="4">
    <location>
        <begin position="144"/>
        <end position="156"/>
    </location>
</feature>
<feature type="compositionally biased region" description="Low complexity" evidence="4">
    <location>
        <begin position="872"/>
        <end position="885"/>
    </location>
</feature>
<feature type="sequence conflict" description="In Ref. 5; AK064813." evidence="5" ref="5">
    <original>L</original>
    <variation>P</variation>
    <location>
        <position position="300"/>
    </location>
</feature>
<comment type="function">
    <text evidence="1">Probably involved in the RNA silencing pathway. May bind to short RNAs such as microRNAs (miRNAs) or short interfering RNAs (siRNAs), and represses the translation of mRNAs which are complementary to them (By similarity).</text>
</comment>
<comment type="similarity">
    <text evidence="5">Belongs to the argonaute family. Ago subfamily.</text>
</comment>
<comment type="sequence caution" evidence="5">
    <conflict type="frameshift">
        <sequence resource="EMBL" id="AK064813"/>
    </conflict>
</comment>
<sequence length="904" mass="100639">MESNSGEIEELPPPPPLPPNAEPIKTDDTKKLSKPKRALMARSGCGKKGQPIQLLTNHFKVSLKAADEFFHHYYVNLKYEDDRPVDGKGIGRKVLDKLQQTYASELANKDFAYDGEKSLFTIGALPQVNNEFTVVLEDFNTGKSSANGGSPGNDSPGNDRKRVRRPYQTKTFKVELNFAAKIPMSAIAQALRGQESENTQEAIRVIDIILRQHSAKQGCLLVRQSFFHNNPSNFVDLGGGVMGCRGFHSSFRATQSGLSLNIDVSTTMIVKPGPVVDFLLANQKVDHPNKIDWAKAKRALKNLRIKTSPANTEYKIVGLSERNCYEQMFTLKQRNGDGEPEGVEVSVYEYFVKNRGIELRYSGDFPCINVGKPKRPTYFPIELCSLVPLQRYTKALSTLQRSSLVEKSRQKPEERMSVLSDVLKRSNYDSEPMLNSCGISIARGFTQVAGRVLQAPKLKAGNGEDLFARNGRWNFNNKRLIKASSIEKWAVVNFSARCNIRDLVRDIIKCGGMKGIKVEDPFDVIEEDPSMRRAPAARRVDGMIDKMQKKLPGQPKFLLCVLAERKNSDIYGPWKRKCLAEFGIITQCVAPTRVNDQYITNVLLKINAKLGGLNSLLQIETSPSIPLVSKVPTIILGMDVSHGSPGQSDIPSIAAVVSSREWPLVSKYRASVRSQSPKLEMIDGLFKPQGAQEDDGLIRELLVDFYTSTGKRKPDQVIIFRDGVSESQFTQVLNIELDQIIEACKFLDENWSPKFTLIVAQKNHHTKFFVPGSQNNVPPGTVVDNAVCHPRNNDFYMCAHAGMIGTTRPTHYHILHDEIGFSADDLQELVHSLSYVYQRSTTAISVVAPICYAHLAAAQVSQFIKFDEMSETSSSHGGHTSAGSAPVPELPRLHNKVRSSMFFC</sequence>
<protein>
    <recommendedName>
        <fullName>Protein argonaute 4A</fullName>
        <shortName>OsAGO4a</shortName>
    </recommendedName>
</protein>
<name>AGO4A_ORYSJ</name>
<dbReference type="EMBL" id="AP000836">
    <property type="protein sequence ID" value="BAA88176.1"/>
    <property type="molecule type" value="Genomic_DNA"/>
</dbReference>
<dbReference type="EMBL" id="AP008207">
    <property type="protein sequence ID" value="BAF04636.1"/>
    <property type="molecule type" value="Genomic_DNA"/>
</dbReference>
<dbReference type="EMBL" id="AP014957">
    <property type="protein sequence ID" value="BAS71541.1"/>
    <property type="molecule type" value="Genomic_DNA"/>
</dbReference>
<dbReference type="EMBL" id="AK064813">
    <property type="status" value="NOT_ANNOTATED_CDS"/>
    <property type="molecule type" value="mRNA"/>
</dbReference>
<dbReference type="RefSeq" id="XP_015621073.1">
    <property type="nucleotide sequence ID" value="XM_015765587.1"/>
</dbReference>
<dbReference type="RefSeq" id="XP_015621074.1">
    <property type="nucleotide sequence ID" value="XM_015765588.1"/>
</dbReference>
<dbReference type="SMR" id="Q9SDG8"/>
<dbReference type="FunCoup" id="Q9SDG8">
    <property type="interactions" value="544"/>
</dbReference>
<dbReference type="STRING" id="39947.Q9SDG8"/>
<dbReference type="iPTMnet" id="Q9SDG8"/>
<dbReference type="PaxDb" id="39947-Q9SDG8"/>
<dbReference type="EnsemblPlants" id="Os01t0275600-01">
    <property type="protein sequence ID" value="Os01t0275600-01"/>
    <property type="gene ID" value="Os01g0275600"/>
</dbReference>
<dbReference type="GeneID" id="4324438"/>
<dbReference type="Gramene" id="Os01t0275600-01">
    <property type="protein sequence ID" value="Os01t0275600-01"/>
    <property type="gene ID" value="Os01g0275600"/>
</dbReference>
<dbReference type="KEGG" id="dosa:Os01g0275600"/>
<dbReference type="KEGG" id="osa:4324438"/>
<dbReference type="eggNOG" id="KOG1041">
    <property type="taxonomic scope" value="Eukaryota"/>
</dbReference>
<dbReference type="HOGENOM" id="CLU_004544_2_0_1"/>
<dbReference type="InParanoid" id="Q9SDG8"/>
<dbReference type="OMA" id="PTNQEYK"/>
<dbReference type="OrthoDB" id="10252740at2759"/>
<dbReference type="Proteomes" id="UP000000763">
    <property type="component" value="Chromosome 1"/>
</dbReference>
<dbReference type="Proteomes" id="UP000059680">
    <property type="component" value="Chromosome 1"/>
</dbReference>
<dbReference type="ExpressionAtlas" id="Q9SDG8">
    <property type="expression patterns" value="baseline and differential"/>
</dbReference>
<dbReference type="GO" id="GO:0005737">
    <property type="term" value="C:cytoplasm"/>
    <property type="evidence" value="ECO:0000318"/>
    <property type="project" value="GO_Central"/>
</dbReference>
<dbReference type="GO" id="GO:0005634">
    <property type="term" value="C:nucleus"/>
    <property type="evidence" value="ECO:0000318"/>
    <property type="project" value="GO_Central"/>
</dbReference>
<dbReference type="GO" id="GO:0003723">
    <property type="term" value="F:RNA binding"/>
    <property type="evidence" value="ECO:0000318"/>
    <property type="project" value="GO_Central"/>
</dbReference>
<dbReference type="GO" id="GO:0004521">
    <property type="term" value="F:RNA endonuclease activity"/>
    <property type="evidence" value="ECO:0000318"/>
    <property type="project" value="GO_Central"/>
</dbReference>
<dbReference type="GO" id="GO:0031047">
    <property type="term" value="P:regulatory ncRNA-mediated gene silencing"/>
    <property type="evidence" value="ECO:0000318"/>
    <property type="project" value="GO_Central"/>
</dbReference>
<dbReference type="CDD" id="cd02846">
    <property type="entry name" value="PAZ_argonaute_like"/>
    <property type="match status" value="1"/>
</dbReference>
<dbReference type="CDD" id="cd04657">
    <property type="entry name" value="Piwi_ago-like"/>
    <property type="match status" value="1"/>
</dbReference>
<dbReference type="FunFam" id="3.30.420.10:FF:000091">
    <property type="entry name" value="Protein argonaute 3"/>
    <property type="match status" value="1"/>
</dbReference>
<dbReference type="FunFam" id="2.170.260.10:FF:000008">
    <property type="entry name" value="Protein argonaute 7"/>
    <property type="match status" value="1"/>
</dbReference>
<dbReference type="Gene3D" id="3.40.50.2300">
    <property type="match status" value="1"/>
</dbReference>
<dbReference type="Gene3D" id="2.170.260.10">
    <property type="entry name" value="paz domain"/>
    <property type="match status" value="1"/>
</dbReference>
<dbReference type="Gene3D" id="3.30.420.10">
    <property type="entry name" value="Ribonuclease H-like superfamily/Ribonuclease H"/>
    <property type="match status" value="1"/>
</dbReference>
<dbReference type="InterPro" id="IPR014811">
    <property type="entry name" value="ArgoL1"/>
</dbReference>
<dbReference type="InterPro" id="IPR032472">
    <property type="entry name" value="ArgoL2"/>
</dbReference>
<dbReference type="InterPro" id="IPR032474">
    <property type="entry name" value="Argonaute_N"/>
</dbReference>
<dbReference type="InterPro" id="IPR003100">
    <property type="entry name" value="PAZ_dom"/>
</dbReference>
<dbReference type="InterPro" id="IPR036085">
    <property type="entry name" value="PAZ_dom_sf"/>
</dbReference>
<dbReference type="InterPro" id="IPR003165">
    <property type="entry name" value="Piwi"/>
</dbReference>
<dbReference type="InterPro" id="IPR045246">
    <property type="entry name" value="Piwi_ago-like"/>
</dbReference>
<dbReference type="InterPro" id="IPR012337">
    <property type="entry name" value="RNaseH-like_sf"/>
</dbReference>
<dbReference type="InterPro" id="IPR036397">
    <property type="entry name" value="RNaseH_sf"/>
</dbReference>
<dbReference type="PANTHER" id="PTHR22891">
    <property type="entry name" value="EUKARYOTIC TRANSLATION INITIATION FACTOR 2C"/>
    <property type="match status" value="1"/>
</dbReference>
<dbReference type="Pfam" id="PF08699">
    <property type="entry name" value="ArgoL1"/>
    <property type="match status" value="1"/>
</dbReference>
<dbReference type="Pfam" id="PF16488">
    <property type="entry name" value="ArgoL2"/>
    <property type="match status" value="1"/>
</dbReference>
<dbReference type="Pfam" id="PF16486">
    <property type="entry name" value="ArgoN"/>
    <property type="match status" value="1"/>
</dbReference>
<dbReference type="Pfam" id="PF02170">
    <property type="entry name" value="PAZ"/>
    <property type="match status" value="1"/>
</dbReference>
<dbReference type="Pfam" id="PF02171">
    <property type="entry name" value="Piwi"/>
    <property type="match status" value="1"/>
</dbReference>
<dbReference type="SMART" id="SM01163">
    <property type="entry name" value="DUF1785"/>
    <property type="match status" value="1"/>
</dbReference>
<dbReference type="SMART" id="SM00950">
    <property type="entry name" value="Piwi"/>
    <property type="match status" value="1"/>
</dbReference>
<dbReference type="SUPFAM" id="SSF101690">
    <property type="entry name" value="PAZ domain"/>
    <property type="match status" value="1"/>
</dbReference>
<dbReference type="SUPFAM" id="SSF53098">
    <property type="entry name" value="Ribonuclease H-like"/>
    <property type="match status" value="1"/>
</dbReference>
<dbReference type="PROSITE" id="PS50821">
    <property type="entry name" value="PAZ"/>
    <property type="match status" value="1"/>
</dbReference>
<dbReference type="PROSITE" id="PS50822">
    <property type="entry name" value="PIWI"/>
    <property type="match status" value="1"/>
</dbReference>